<evidence type="ECO:0000255" key="1">
    <source>
        <dbReference type="HAMAP-Rule" id="MF_00201"/>
    </source>
</evidence>
<accession>Q1B6C7</accession>
<comment type="function">
    <text evidence="1">Involved in DNA repair and RecF pathway recombination.</text>
</comment>
<comment type="similarity">
    <text evidence="1">Belongs to the RecO family.</text>
</comment>
<proteinExistence type="inferred from homology"/>
<dbReference type="EMBL" id="CP000384">
    <property type="protein sequence ID" value="ABG09557.1"/>
    <property type="molecule type" value="Genomic_DNA"/>
</dbReference>
<dbReference type="SMR" id="Q1B6C7"/>
<dbReference type="KEGG" id="mmc:Mmcs_3450"/>
<dbReference type="HOGENOM" id="CLU_066632_1_1_11"/>
<dbReference type="BioCyc" id="MSP164756:G1G6O-3520-MONOMER"/>
<dbReference type="GO" id="GO:0043590">
    <property type="term" value="C:bacterial nucleoid"/>
    <property type="evidence" value="ECO:0007669"/>
    <property type="project" value="TreeGrafter"/>
</dbReference>
<dbReference type="GO" id="GO:0006310">
    <property type="term" value="P:DNA recombination"/>
    <property type="evidence" value="ECO:0007669"/>
    <property type="project" value="UniProtKB-UniRule"/>
</dbReference>
<dbReference type="GO" id="GO:0006302">
    <property type="term" value="P:double-strand break repair"/>
    <property type="evidence" value="ECO:0007669"/>
    <property type="project" value="TreeGrafter"/>
</dbReference>
<dbReference type="FunFam" id="2.40.50.140:FF:000176">
    <property type="entry name" value="DNA repair protein RecO"/>
    <property type="match status" value="1"/>
</dbReference>
<dbReference type="Gene3D" id="2.40.50.140">
    <property type="entry name" value="Nucleic acid-binding proteins"/>
    <property type="match status" value="1"/>
</dbReference>
<dbReference type="Gene3D" id="1.20.1440.120">
    <property type="entry name" value="Recombination protein O, C-terminal domain"/>
    <property type="match status" value="1"/>
</dbReference>
<dbReference type="HAMAP" id="MF_00201">
    <property type="entry name" value="RecO"/>
    <property type="match status" value="1"/>
</dbReference>
<dbReference type="InterPro" id="IPR037278">
    <property type="entry name" value="ARFGAP/RecO"/>
</dbReference>
<dbReference type="InterPro" id="IPR022572">
    <property type="entry name" value="DNA_rep/recomb_RecO_N"/>
</dbReference>
<dbReference type="InterPro" id="IPR012340">
    <property type="entry name" value="NA-bd_OB-fold"/>
</dbReference>
<dbReference type="InterPro" id="IPR003717">
    <property type="entry name" value="RecO"/>
</dbReference>
<dbReference type="InterPro" id="IPR042242">
    <property type="entry name" value="RecO_C"/>
</dbReference>
<dbReference type="NCBIfam" id="TIGR00613">
    <property type="entry name" value="reco"/>
    <property type="match status" value="1"/>
</dbReference>
<dbReference type="PANTHER" id="PTHR33991">
    <property type="entry name" value="DNA REPAIR PROTEIN RECO"/>
    <property type="match status" value="1"/>
</dbReference>
<dbReference type="PANTHER" id="PTHR33991:SF1">
    <property type="entry name" value="DNA REPAIR PROTEIN RECO"/>
    <property type="match status" value="1"/>
</dbReference>
<dbReference type="Pfam" id="PF02565">
    <property type="entry name" value="RecO_C"/>
    <property type="match status" value="1"/>
</dbReference>
<dbReference type="Pfam" id="PF11967">
    <property type="entry name" value="RecO_N"/>
    <property type="match status" value="1"/>
</dbReference>
<dbReference type="SUPFAM" id="SSF57863">
    <property type="entry name" value="ArfGap/RecO-like zinc finger"/>
    <property type="match status" value="1"/>
</dbReference>
<dbReference type="SUPFAM" id="SSF50249">
    <property type="entry name" value="Nucleic acid-binding proteins"/>
    <property type="match status" value="1"/>
</dbReference>
<feature type="chain" id="PRO_0000264824" description="DNA repair protein RecO">
    <location>
        <begin position="1"/>
        <end position="276"/>
    </location>
</feature>
<gene>
    <name evidence="1" type="primary">recO</name>
    <name type="ordered locus">Mmcs_3450</name>
</gene>
<name>RECO_MYCSS</name>
<protein>
    <recommendedName>
        <fullName evidence="1">DNA repair protein RecO</fullName>
    </recommendedName>
    <alternativeName>
        <fullName evidence="1">Recombination protein O</fullName>
    </alternativeName>
</protein>
<keyword id="KW-0227">DNA damage</keyword>
<keyword id="KW-0233">DNA recombination</keyword>
<keyword id="KW-0234">DNA repair</keyword>
<sequence length="276" mass="30060">MRLYRDRAVVLRQHKLGEADRIVTLLTRDHGLVRAVAKGVRRTRSKFGARLEPFAHIDVQLHPGRNLDIVTQVQAIDAFASDIVSDYGRYTSACAVLETAERLAGEERAPMPALHRLTVGALRAVADGSRPRELVLDAYLLRAMGIAGWAPALTECARCATPGPHRAFHVAAGGSVCVHCRPSGSVTPPQAVLDLMSALHDGDWPAAEASTPSHRSQASGLVAAHLQWHLERQLRTLPLVERVYRVDHAVADHRISLLRQDVHRGDEPGDQLAAGS</sequence>
<reference key="1">
    <citation type="submission" date="2006-06" db="EMBL/GenBank/DDBJ databases">
        <title>Complete sequence of chromosome of Mycobacterium sp. MCS.</title>
        <authorList>
            <consortium name="US DOE Joint Genome Institute"/>
            <person name="Copeland A."/>
            <person name="Lucas S."/>
            <person name="Lapidus A."/>
            <person name="Barry K."/>
            <person name="Detter J.C."/>
            <person name="Glavina del Rio T."/>
            <person name="Hammon N."/>
            <person name="Israni S."/>
            <person name="Dalin E."/>
            <person name="Tice H."/>
            <person name="Pitluck S."/>
            <person name="Martinez M."/>
            <person name="Schmutz J."/>
            <person name="Larimer F."/>
            <person name="Land M."/>
            <person name="Hauser L."/>
            <person name="Kyrpides N."/>
            <person name="Kim E."/>
            <person name="Miller C.D."/>
            <person name="Hughes J.E."/>
            <person name="Anderson A.J."/>
            <person name="Sims R.C."/>
            <person name="Richardson P."/>
        </authorList>
    </citation>
    <scope>NUCLEOTIDE SEQUENCE [LARGE SCALE GENOMIC DNA]</scope>
    <source>
        <strain>MCS</strain>
    </source>
</reference>
<organism>
    <name type="scientific">Mycobacterium sp. (strain MCS)</name>
    <dbReference type="NCBI Taxonomy" id="164756"/>
    <lineage>
        <taxon>Bacteria</taxon>
        <taxon>Bacillati</taxon>
        <taxon>Actinomycetota</taxon>
        <taxon>Actinomycetes</taxon>
        <taxon>Mycobacteriales</taxon>
        <taxon>Mycobacteriaceae</taxon>
        <taxon>Mycobacterium</taxon>
    </lineage>
</organism>